<feature type="chain" id="PRO_0000367806" description="Glutamate--tRNA ligase">
    <location>
        <begin position="1"/>
        <end position="573"/>
    </location>
</feature>
<feature type="short sequence motif" description="'HIGH' region" evidence="1">
    <location>
        <begin position="106"/>
        <end position="116"/>
    </location>
</feature>
<gene>
    <name evidence="1" type="primary">gltX</name>
    <name type="ordered locus">TON_0189</name>
</gene>
<organism>
    <name type="scientific">Thermococcus onnurineus (strain NA1)</name>
    <dbReference type="NCBI Taxonomy" id="523850"/>
    <lineage>
        <taxon>Archaea</taxon>
        <taxon>Methanobacteriati</taxon>
        <taxon>Methanobacteriota</taxon>
        <taxon>Thermococci</taxon>
        <taxon>Thermococcales</taxon>
        <taxon>Thermococcaceae</taxon>
        <taxon>Thermococcus</taxon>
    </lineage>
</organism>
<proteinExistence type="inferred from homology"/>
<reference key="1">
    <citation type="journal article" date="2008" name="J. Bacteriol.">
        <title>The complete genome sequence of Thermococcus onnurineus NA1 reveals a mixed heterotrophic and carboxydotrophic metabolism.</title>
        <authorList>
            <person name="Lee H.S."/>
            <person name="Kang S.G."/>
            <person name="Bae S.S."/>
            <person name="Lim J.K."/>
            <person name="Cho Y."/>
            <person name="Kim Y.J."/>
            <person name="Jeon J.H."/>
            <person name="Cha S.-S."/>
            <person name="Kwon K.K."/>
            <person name="Kim H.-T."/>
            <person name="Park C.-J."/>
            <person name="Lee H.-W."/>
            <person name="Kim S.I."/>
            <person name="Chun J."/>
            <person name="Colwell R.R."/>
            <person name="Kim S.-J."/>
            <person name="Lee J.-H."/>
        </authorList>
    </citation>
    <scope>NUCLEOTIDE SEQUENCE [LARGE SCALE GENOMIC DNA]</scope>
    <source>
        <strain>NA1</strain>
    </source>
</reference>
<accession>B6YSY7</accession>
<dbReference type="EC" id="6.1.1.17" evidence="1"/>
<dbReference type="EMBL" id="CP000855">
    <property type="protein sequence ID" value="ACJ15674.1"/>
    <property type="molecule type" value="Genomic_DNA"/>
</dbReference>
<dbReference type="RefSeq" id="WP_012571147.1">
    <property type="nucleotide sequence ID" value="NC_011529.1"/>
</dbReference>
<dbReference type="SMR" id="B6YSY7"/>
<dbReference type="STRING" id="523850.TON_0189"/>
<dbReference type="GeneID" id="7017846"/>
<dbReference type="KEGG" id="ton:TON_0189"/>
<dbReference type="PATRIC" id="fig|523850.10.peg.190"/>
<dbReference type="eggNOG" id="arCOG04302">
    <property type="taxonomic scope" value="Archaea"/>
</dbReference>
<dbReference type="HOGENOM" id="CLU_001882_1_3_2"/>
<dbReference type="OrthoDB" id="10470at2157"/>
<dbReference type="Proteomes" id="UP000002727">
    <property type="component" value="Chromosome"/>
</dbReference>
<dbReference type="GO" id="GO:0005829">
    <property type="term" value="C:cytosol"/>
    <property type="evidence" value="ECO:0007669"/>
    <property type="project" value="TreeGrafter"/>
</dbReference>
<dbReference type="GO" id="GO:0005524">
    <property type="term" value="F:ATP binding"/>
    <property type="evidence" value="ECO:0007669"/>
    <property type="project" value="UniProtKB-UniRule"/>
</dbReference>
<dbReference type="GO" id="GO:0004818">
    <property type="term" value="F:glutamate-tRNA ligase activity"/>
    <property type="evidence" value="ECO:0007669"/>
    <property type="project" value="UniProtKB-UniRule"/>
</dbReference>
<dbReference type="GO" id="GO:0043604">
    <property type="term" value="P:amide biosynthetic process"/>
    <property type="evidence" value="ECO:0007669"/>
    <property type="project" value="TreeGrafter"/>
</dbReference>
<dbReference type="GO" id="GO:0006424">
    <property type="term" value="P:glutamyl-tRNA aminoacylation"/>
    <property type="evidence" value="ECO:0007669"/>
    <property type="project" value="UniProtKB-UniRule"/>
</dbReference>
<dbReference type="CDD" id="cd09287">
    <property type="entry name" value="GluRS_non_core"/>
    <property type="match status" value="1"/>
</dbReference>
<dbReference type="FunFam" id="2.40.240.10:FF:000033">
    <property type="entry name" value="Glutamate--tRNA ligase"/>
    <property type="match status" value="1"/>
</dbReference>
<dbReference type="FunFam" id="3.40.50.620:FF:000222">
    <property type="entry name" value="Glutamate--tRNA ligase"/>
    <property type="match status" value="1"/>
</dbReference>
<dbReference type="Gene3D" id="2.40.240.100">
    <property type="match status" value="1"/>
</dbReference>
<dbReference type="Gene3D" id="3.40.50.620">
    <property type="entry name" value="HUPs"/>
    <property type="match status" value="1"/>
</dbReference>
<dbReference type="Gene3D" id="2.40.240.10">
    <property type="entry name" value="Ribosomal Protein L25, Chain P"/>
    <property type="match status" value="1"/>
</dbReference>
<dbReference type="HAMAP" id="MF_02076">
    <property type="entry name" value="Glu_tRNA_synth_type2"/>
    <property type="match status" value="1"/>
</dbReference>
<dbReference type="InterPro" id="IPR050132">
    <property type="entry name" value="Gln/Glu-tRNA_Ligase"/>
</dbReference>
<dbReference type="InterPro" id="IPR004526">
    <property type="entry name" value="Glu-tRNA-synth_arc/euk"/>
</dbReference>
<dbReference type="InterPro" id="IPR000924">
    <property type="entry name" value="Glu/Gln-tRNA-synth"/>
</dbReference>
<dbReference type="InterPro" id="IPR020058">
    <property type="entry name" value="Glu/Gln-tRNA-synth_Ib_cat-dom"/>
</dbReference>
<dbReference type="InterPro" id="IPR020059">
    <property type="entry name" value="Glu/Gln-tRNA-synth_Ib_codon-bd"/>
</dbReference>
<dbReference type="InterPro" id="IPR020056">
    <property type="entry name" value="Rbsml_bL25/Gln-tRNA_synth_N"/>
</dbReference>
<dbReference type="InterPro" id="IPR011035">
    <property type="entry name" value="Ribosomal_bL25/Gln-tRNA_synth"/>
</dbReference>
<dbReference type="InterPro" id="IPR014729">
    <property type="entry name" value="Rossmann-like_a/b/a_fold"/>
</dbReference>
<dbReference type="InterPro" id="IPR049437">
    <property type="entry name" value="tRNA-synt_1c_C2"/>
</dbReference>
<dbReference type="NCBIfam" id="TIGR00463">
    <property type="entry name" value="gltX_arch"/>
    <property type="match status" value="1"/>
</dbReference>
<dbReference type="NCBIfam" id="NF003169">
    <property type="entry name" value="PRK04156.1"/>
    <property type="match status" value="1"/>
</dbReference>
<dbReference type="PANTHER" id="PTHR43097:SF5">
    <property type="entry name" value="GLUTAMATE--TRNA LIGASE"/>
    <property type="match status" value="1"/>
</dbReference>
<dbReference type="PANTHER" id="PTHR43097">
    <property type="entry name" value="GLUTAMINE-TRNA LIGASE"/>
    <property type="match status" value="1"/>
</dbReference>
<dbReference type="Pfam" id="PF00749">
    <property type="entry name" value="tRNA-synt_1c"/>
    <property type="match status" value="1"/>
</dbReference>
<dbReference type="Pfam" id="PF03950">
    <property type="entry name" value="tRNA-synt_1c_C"/>
    <property type="match status" value="1"/>
</dbReference>
<dbReference type="Pfam" id="PF20974">
    <property type="entry name" value="tRNA-synt_1c_C2"/>
    <property type="match status" value="1"/>
</dbReference>
<dbReference type="PRINTS" id="PR00987">
    <property type="entry name" value="TRNASYNTHGLU"/>
</dbReference>
<dbReference type="SUPFAM" id="SSF52374">
    <property type="entry name" value="Nucleotidylyl transferase"/>
    <property type="match status" value="1"/>
</dbReference>
<dbReference type="SUPFAM" id="SSF50715">
    <property type="entry name" value="Ribosomal protein L25-like"/>
    <property type="match status" value="1"/>
</dbReference>
<keyword id="KW-0030">Aminoacyl-tRNA synthetase</keyword>
<keyword id="KW-0067">ATP-binding</keyword>
<keyword id="KW-0963">Cytoplasm</keyword>
<keyword id="KW-0436">Ligase</keyword>
<keyword id="KW-0547">Nucleotide-binding</keyword>
<keyword id="KW-0648">Protein biosynthesis</keyword>
<name>SYE_THEON</name>
<protein>
    <recommendedName>
        <fullName evidence="1">Glutamate--tRNA ligase</fullName>
        <ecNumber evidence="1">6.1.1.17</ecNumber>
    </recommendedName>
    <alternativeName>
        <fullName evidence="1">Glutamyl-tRNA synthetase</fullName>
        <shortName evidence="1">GluRS</shortName>
    </alternativeName>
</protein>
<sequence>MNVEELIMKYALINAISHKGKANPKAVIGKVLGENPELRPKAKEIIPLVNQIVEQVNGMDIEEQEAKLKEIYPEFFEAKKEKKEEKKGLPPLPKAEKGKVVTRFAPNPDGAFHLGNARAAILSHEYARLYGGKFILRFDDTDPKVKRPEPKFYEWIIEDLKWLGFQIDEIHIASDRLEIYYKYAEELIKMGKAYVCTCPPEKFRELRDNGIACPHREEPVEVQLERWRKMLNGEYKEGEAVVRIKTDLKHPNPAVRDWPALRIIDNPSHPRTGDKYRVWPLYNFASAIDDHELGVTHIFRGQEHAENETRQRYIYDYFGWEYPVTVHHGRLSIEGVILSKSKTRKGIDEGKYFGWDDPRLGTIRALKRRGIRPEAIRELIIEVGLKRSDTTISWDNLAAINRRIVEPIANRYFFVADPIPMYIEGYDEEFVAEIPLHPDHPDRGVRKLKFEPGRPVYVSKDDMELFKPGSFVRLKDLFNVEILEVSEEGIKARFHSIEYEIARENRWRMVHWVTEGRACGVLIPQGDELIVRKGLLESDANVKVDDVVQFERFGFVRIDDVTPEKVVAIFAHK</sequence>
<comment type="function">
    <text evidence="1">Catalyzes the attachment of glutamate to tRNA(Glu) in a two-step reaction: glutamate is first activated by ATP to form Glu-AMP and then transferred to the acceptor end of tRNA(Glu).</text>
</comment>
<comment type="catalytic activity">
    <reaction evidence="1">
        <text>tRNA(Glu) + L-glutamate + ATP = L-glutamyl-tRNA(Glu) + AMP + diphosphate</text>
        <dbReference type="Rhea" id="RHEA:23540"/>
        <dbReference type="Rhea" id="RHEA-COMP:9663"/>
        <dbReference type="Rhea" id="RHEA-COMP:9680"/>
        <dbReference type="ChEBI" id="CHEBI:29985"/>
        <dbReference type="ChEBI" id="CHEBI:30616"/>
        <dbReference type="ChEBI" id="CHEBI:33019"/>
        <dbReference type="ChEBI" id="CHEBI:78442"/>
        <dbReference type="ChEBI" id="CHEBI:78520"/>
        <dbReference type="ChEBI" id="CHEBI:456215"/>
        <dbReference type="EC" id="6.1.1.17"/>
    </reaction>
</comment>
<comment type="subcellular location">
    <subcellularLocation>
        <location evidence="1">Cytoplasm</location>
    </subcellularLocation>
</comment>
<comment type="similarity">
    <text evidence="1">Belongs to the class-I aminoacyl-tRNA synthetase family. Glutamate--tRNA ligase type 2 subfamily.</text>
</comment>
<evidence type="ECO:0000255" key="1">
    <source>
        <dbReference type="HAMAP-Rule" id="MF_02076"/>
    </source>
</evidence>